<proteinExistence type="inferred from homology"/>
<reference key="1">
    <citation type="journal article" date="2013" name="Plant Physiol.">
        <title>A Nostoc punctiforme Sugar Transporter Necessary to Establish a Cyanobacterium-Plant Symbiosis.</title>
        <authorList>
            <person name="Ekman M."/>
            <person name="Picossi S."/>
            <person name="Campbell E.L."/>
            <person name="Meeks J.C."/>
            <person name="Flores E."/>
        </authorList>
    </citation>
    <scope>NUCLEOTIDE SEQUENCE [LARGE SCALE GENOMIC DNA]</scope>
    <source>
        <strain>ATCC 29133 / PCC 73102</strain>
    </source>
</reference>
<sequence length="542" mass="61388">MSTELQSELIQAVELRRNFAIISHPDAGKTTLTEKLLLYGGAIHEAGAVKARRAQRKATSDWMAMEQQRGISITSTVLQFEYQKCQINLLDTPGHQDFSEDTYRTLAAADNAVMLIDAAKGLEPQTRKLFEVCKLRGIPIFTFINKLDRPGREPLELLDEIEQELGLQTYAVNWPIGMGDRFKGVFDRHKQQIHLFERSAHGSREARDTIVELGDPRIEEKLEQSLYYQLKNDLELLEGVGPELDLQLVHEGKMTPVFFGSAMTNFGVELFLKYFLEYALKPGSHYSSVGEVAPTYPEFSGFVFKLQANMDPKHRDRVAFIRVCTGKFEKDMMVNHARIGKLIRLSRPQKLFAQERESIDVAYPGDVIGLNNPGVFAIGDTIYTGQKLEYEGIPYFSPELFASLRNPNPSKSKQFQKGVAELREEGAVQIMYSTDEAKRDPILAAVGQLQFEVVQFRLQNEYGVETILDLLPYSVARWVEGGWEALEKVGRIFNTTTVKDSMGRPVLLFRNEWNCQQLLGDHPELKLSAIAPVFSSQQPVEE</sequence>
<protein>
    <recommendedName>
        <fullName evidence="1">Peptide chain release factor 3</fullName>
        <shortName evidence="1">RF-3</shortName>
    </recommendedName>
</protein>
<dbReference type="EMBL" id="CP001037">
    <property type="protein sequence ID" value="ACC82230.1"/>
    <property type="molecule type" value="Genomic_DNA"/>
</dbReference>
<dbReference type="RefSeq" id="WP_012410201.1">
    <property type="nucleotide sequence ID" value="NC_010628.1"/>
</dbReference>
<dbReference type="SMR" id="B2J573"/>
<dbReference type="STRING" id="63737.Npun_R3846"/>
<dbReference type="EnsemblBacteria" id="ACC82230">
    <property type="protein sequence ID" value="ACC82230"/>
    <property type="gene ID" value="Npun_R3846"/>
</dbReference>
<dbReference type="KEGG" id="npu:Npun_R3846"/>
<dbReference type="eggNOG" id="COG4108">
    <property type="taxonomic scope" value="Bacteria"/>
</dbReference>
<dbReference type="HOGENOM" id="CLU_002794_2_1_3"/>
<dbReference type="OrthoDB" id="580826at2"/>
<dbReference type="PhylomeDB" id="B2J573"/>
<dbReference type="Proteomes" id="UP000001191">
    <property type="component" value="Chromosome"/>
</dbReference>
<dbReference type="GO" id="GO:0005829">
    <property type="term" value="C:cytosol"/>
    <property type="evidence" value="ECO:0007669"/>
    <property type="project" value="TreeGrafter"/>
</dbReference>
<dbReference type="GO" id="GO:0005525">
    <property type="term" value="F:GTP binding"/>
    <property type="evidence" value="ECO:0007669"/>
    <property type="project" value="UniProtKB-UniRule"/>
</dbReference>
<dbReference type="GO" id="GO:0003924">
    <property type="term" value="F:GTPase activity"/>
    <property type="evidence" value="ECO:0007669"/>
    <property type="project" value="InterPro"/>
</dbReference>
<dbReference type="GO" id="GO:0016150">
    <property type="term" value="F:translation release factor activity, codon nonspecific"/>
    <property type="evidence" value="ECO:0007669"/>
    <property type="project" value="TreeGrafter"/>
</dbReference>
<dbReference type="GO" id="GO:0016149">
    <property type="term" value="F:translation release factor activity, codon specific"/>
    <property type="evidence" value="ECO:0007669"/>
    <property type="project" value="UniProtKB-UniRule"/>
</dbReference>
<dbReference type="GO" id="GO:0006449">
    <property type="term" value="P:regulation of translational termination"/>
    <property type="evidence" value="ECO:0007669"/>
    <property type="project" value="UniProtKB-UniRule"/>
</dbReference>
<dbReference type="CDD" id="cd04169">
    <property type="entry name" value="RF3"/>
    <property type="match status" value="1"/>
</dbReference>
<dbReference type="CDD" id="cd03689">
    <property type="entry name" value="RF3_II"/>
    <property type="match status" value="1"/>
</dbReference>
<dbReference type="FunFam" id="3.30.70.3280:FF:000001">
    <property type="entry name" value="Peptide chain release factor 3"/>
    <property type="match status" value="1"/>
</dbReference>
<dbReference type="FunFam" id="3.40.50.300:FF:000542">
    <property type="entry name" value="Peptide chain release factor 3"/>
    <property type="match status" value="1"/>
</dbReference>
<dbReference type="Gene3D" id="3.40.50.300">
    <property type="entry name" value="P-loop containing nucleotide triphosphate hydrolases"/>
    <property type="match status" value="1"/>
</dbReference>
<dbReference type="Gene3D" id="3.30.70.3280">
    <property type="entry name" value="Peptide chain release factor 3, domain III"/>
    <property type="match status" value="1"/>
</dbReference>
<dbReference type="Gene3D" id="2.40.30.10">
    <property type="entry name" value="Translation factors"/>
    <property type="match status" value="1"/>
</dbReference>
<dbReference type="HAMAP" id="MF_00072">
    <property type="entry name" value="Rel_fac_3"/>
    <property type="match status" value="1"/>
</dbReference>
<dbReference type="InterPro" id="IPR053905">
    <property type="entry name" value="EF-G-like_DII"/>
</dbReference>
<dbReference type="InterPro" id="IPR035647">
    <property type="entry name" value="EFG_III/V"/>
</dbReference>
<dbReference type="InterPro" id="IPR031157">
    <property type="entry name" value="G_TR_CS"/>
</dbReference>
<dbReference type="InterPro" id="IPR027417">
    <property type="entry name" value="P-loop_NTPase"/>
</dbReference>
<dbReference type="InterPro" id="IPR004548">
    <property type="entry name" value="PrfC"/>
</dbReference>
<dbReference type="InterPro" id="IPR032090">
    <property type="entry name" value="RF3_C"/>
</dbReference>
<dbReference type="InterPro" id="IPR038467">
    <property type="entry name" value="RF3_dom_3_sf"/>
</dbReference>
<dbReference type="InterPro" id="IPR041732">
    <property type="entry name" value="RF3_GTP-bd"/>
</dbReference>
<dbReference type="InterPro" id="IPR005225">
    <property type="entry name" value="Small_GTP-bd"/>
</dbReference>
<dbReference type="InterPro" id="IPR000795">
    <property type="entry name" value="T_Tr_GTP-bd_dom"/>
</dbReference>
<dbReference type="InterPro" id="IPR009000">
    <property type="entry name" value="Transl_B-barrel_sf"/>
</dbReference>
<dbReference type="NCBIfam" id="TIGR00503">
    <property type="entry name" value="prfC"/>
    <property type="match status" value="1"/>
</dbReference>
<dbReference type="NCBIfam" id="NF001964">
    <property type="entry name" value="PRK00741.1"/>
    <property type="match status" value="1"/>
</dbReference>
<dbReference type="NCBIfam" id="TIGR00231">
    <property type="entry name" value="small_GTP"/>
    <property type="match status" value="1"/>
</dbReference>
<dbReference type="PANTHER" id="PTHR43556">
    <property type="entry name" value="PEPTIDE CHAIN RELEASE FACTOR RF3"/>
    <property type="match status" value="1"/>
</dbReference>
<dbReference type="PANTHER" id="PTHR43556:SF2">
    <property type="entry name" value="PEPTIDE CHAIN RELEASE FACTOR RF3"/>
    <property type="match status" value="1"/>
</dbReference>
<dbReference type="Pfam" id="PF22042">
    <property type="entry name" value="EF-G_D2"/>
    <property type="match status" value="1"/>
</dbReference>
<dbReference type="Pfam" id="PF00009">
    <property type="entry name" value="GTP_EFTU"/>
    <property type="match status" value="1"/>
</dbReference>
<dbReference type="Pfam" id="PF16658">
    <property type="entry name" value="RF3_C"/>
    <property type="match status" value="1"/>
</dbReference>
<dbReference type="PRINTS" id="PR00315">
    <property type="entry name" value="ELONGATNFCT"/>
</dbReference>
<dbReference type="SUPFAM" id="SSF54980">
    <property type="entry name" value="EF-G C-terminal domain-like"/>
    <property type="match status" value="1"/>
</dbReference>
<dbReference type="SUPFAM" id="SSF52540">
    <property type="entry name" value="P-loop containing nucleoside triphosphate hydrolases"/>
    <property type="match status" value="1"/>
</dbReference>
<dbReference type="SUPFAM" id="SSF50447">
    <property type="entry name" value="Translation proteins"/>
    <property type="match status" value="1"/>
</dbReference>
<dbReference type="PROSITE" id="PS00301">
    <property type="entry name" value="G_TR_1"/>
    <property type="match status" value="1"/>
</dbReference>
<dbReference type="PROSITE" id="PS51722">
    <property type="entry name" value="G_TR_2"/>
    <property type="match status" value="1"/>
</dbReference>
<name>RF3_NOSP7</name>
<organism>
    <name type="scientific">Nostoc punctiforme (strain ATCC 29133 / PCC 73102)</name>
    <dbReference type="NCBI Taxonomy" id="63737"/>
    <lineage>
        <taxon>Bacteria</taxon>
        <taxon>Bacillati</taxon>
        <taxon>Cyanobacteriota</taxon>
        <taxon>Cyanophyceae</taxon>
        <taxon>Nostocales</taxon>
        <taxon>Nostocaceae</taxon>
        <taxon>Nostoc</taxon>
    </lineage>
</organism>
<gene>
    <name evidence="1" type="primary">prfC</name>
    <name type="ordered locus">Npun_R3846</name>
</gene>
<feature type="chain" id="PRO_1000092490" description="Peptide chain release factor 3">
    <location>
        <begin position="1"/>
        <end position="542"/>
    </location>
</feature>
<feature type="domain" description="tr-type G">
    <location>
        <begin position="14"/>
        <end position="283"/>
    </location>
</feature>
<feature type="binding site" evidence="1">
    <location>
        <begin position="23"/>
        <end position="30"/>
    </location>
    <ligand>
        <name>GTP</name>
        <dbReference type="ChEBI" id="CHEBI:37565"/>
    </ligand>
</feature>
<feature type="binding site" evidence="1">
    <location>
        <begin position="91"/>
        <end position="95"/>
    </location>
    <ligand>
        <name>GTP</name>
        <dbReference type="ChEBI" id="CHEBI:37565"/>
    </ligand>
</feature>
<feature type="binding site" evidence="1">
    <location>
        <begin position="145"/>
        <end position="148"/>
    </location>
    <ligand>
        <name>GTP</name>
        <dbReference type="ChEBI" id="CHEBI:37565"/>
    </ligand>
</feature>
<comment type="function">
    <text evidence="1">Increases the formation of ribosomal termination complexes and stimulates activities of RF-1 and RF-2. It binds guanine nucleotides and has strong preference for UGA stop codons. It may interact directly with the ribosome. The stimulation of RF-1 and RF-2 is significantly reduced by GTP and GDP, but not by GMP.</text>
</comment>
<comment type="subcellular location">
    <subcellularLocation>
        <location evidence="1">Cytoplasm</location>
    </subcellularLocation>
</comment>
<comment type="similarity">
    <text evidence="1">Belongs to the TRAFAC class translation factor GTPase superfamily. Classic translation factor GTPase family. PrfC subfamily.</text>
</comment>
<keyword id="KW-0963">Cytoplasm</keyword>
<keyword id="KW-0342">GTP-binding</keyword>
<keyword id="KW-0547">Nucleotide-binding</keyword>
<keyword id="KW-0648">Protein biosynthesis</keyword>
<keyword id="KW-1185">Reference proteome</keyword>
<accession>B2J573</accession>
<evidence type="ECO:0000255" key="1">
    <source>
        <dbReference type="HAMAP-Rule" id="MF_00072"/>
    </source>
</evidence>